<accession>P22723</accession>
<accession>Q91V50</accession>
<accession>Q91VA8</accession>
<organism>
    <name type="scientific">Mus musculus</name>
    <name type="common">Mouse</name>
    <dbReference type="NCBI Taxonomy" id="10090"/>
    <lineage>
        <taxon>Eukaryota</taxon>
        <taxon>Metazoa</taxon>
        <taxon>Chordata</taxon>
        <taxon>Craniata</taxon>
        <taxon>Vertebrata</taxon>
        <taxon>Euteleostomi</taxon>
        <taxon>Mammalia</taxon>
        <taxon>Eutheria</taxon>
        <taxon>Euarchontoglires</taxon>
        <taxon>Glires</taxon>
        <taxon>Rodentia</taxon>
        <taxon>Myomorpha</taxon>
        <taxon>Muroidea</taxon>
        <taxon>Muridae</taxon>
        <taxon>Murinae</taxon>
        <taxon>Mus</taxon>
        <taxon>Mus</taxon>
    </lineage>
</organism>
<evidence type="ECO:0000250" key="1">
    <source>
        <dbReference type="UniProtKB" id="P08219"/>
    </source>
</evidence>
<evidence type="ECO:0000250" key="2">
    <source>
        <dbReference type="UniProtKB" id="P18507"/>
    </source>
</evidence>
<evidence type="ECO:0000250" key="3">
    <source>
        <dbReference type="UniProtKB" id="P18508"/>
    </source>
</evidence>
<evidence type="ECO:0000255" key="4"/>
<evidence type="ECO:0000269" key="5">
    <source>
    </source>
</evidence>
<evidence type="ECO:0000269" key="6">
    <source>
    </source>
</evidence>
<evidence type="ECO:0000269" key="7">
    <source>
    </source>
</evidence>
<evidence type="ECO:0000269" key="8">
    <source>
    </source>
</evidence>
<evidence type="ECO:0000269" key="9">
    <source>
    </source>
</evidence>
<evidence type="ECO:0000269" key="10">
    <source>
    </source>
</evidence>
<evidence type="ECO:0000269" key="11">
    <source>
    </source>
</evidence>
<evidence type="ECO:0000269" key="12">
    <source>
    </source>
</evidence>
<evidence type="ECO:0000269" key="13">
    <source>
    </source>
</evidence>
<evidence type="ECO:0000269" key="14">
    <source>
    </source>
</evidence>
<evidence type="ECO:0000303" key="15">
    <source>
    </source>
</evidence>
<evidence type="ECO:0000303" key="16">
    <source>
    </source>
</evidence>
<evidence type="ECO:0000305" key="17"/>
<evidence type="ECO:0000312" key="18">
    <source>
        <dbReference type="MGI" id="MGI:95623"/>
    </source>
</evidence>
<evidence type="ECO:0007829" key="19">
    <source>
        <dbReference type="PDB" id="7CDB"/>
    </source>
</evidence>
<evidence type="ECO:0007829" key="20">
    <source>
        <dbReference type="PDB" id="8G4O"/>
    </source>
</evidence>
<dbReference type="EMBL" id="M86572">
    <property type="protein sequence ID" value="AAB59635.1"/>
    <property type="molecule type" value="mRNA"/>
</dbReference>
<dbReference type="EMBL" id="M62374">
    <property type="protein sequence ID" value="AAA37653.1"/>
    <property type="molecule type" value="mRNA"/>
</dbReference>
<dbReference type="EMBL" id="AF233775">
    <property type="protein sequence ID" value="AAK71573.1"/>
    <property type="molecule type" value="mRNA"/>
</dbReference>
<dbReference type="EMBL" id="AF233776">
    <property type="protein sequence ID" value="AAK71574.1"/>
    <property type="molecule type" value="mRNA"/>
</dbReference>
<dbReference type="EMBL" id="AF233777">
    <property type="protein sequence ID" value="AAK71575.1"/>
    <property type="molecule type" value="mRNA"/>
</dbReference>
<dbReference type="EMBL" id="AF233778">
    <property type="protein sequence ID" value="AAK71576.1"/>
    <property type="molecule type" value="mRNA"/>
</dbReference>
<dbReference type="EMBL" id="AF233779">
    <property type="protein sequence ID" value="AAK71577.1"/>
    <property type="molecule type" value="mRNA"/>
</dbReference>
<dbReference type="EMBL" id="AF233780">
    <property type="protein sequence ID" value="AAK71578.1"/>
    <property type="molecule type" value="mRNA"/>
</dbReference>
<dbReference type="EMBL" id="AF233781">
    <property type="protein sequence ID" value="AAK71579.1"/>
    <property type="molecule type" value="mRNA"/>
</dbReference>
<dbReference type="EMBL" id="AF233782">
    <property type="protein sequence ID" value="AAK71580.1"/>
    <property type="molecule type" value="mRNA"/>
</dbReference>
<dbReference type="EMBL" id="AF233783">
    <property type="protein sequence ID" value="AAK71581.1"/>
    <property type="molecule type" value="mRNA"/>
</dbReference>
<dbReference type="EMBL" id="AF233784">
    <property type="protein sequence ID" value="AAK71582.1"/>
    <property type="molecule type" value="mRNA"/>
</dbReference>
<dbReference type="EMBL" id="AF233785">
    <property type="protein sequence ID" value="AAK71583.1"/>
    <property type="molecule type" value="mRNA"/>
</dbReference>
<dbReference type="EMBL" id="AF233786">
    <property type="protein sequence ID" value="AAK71584.1"/>
    <property type="molecule type" value="mRNA"/>
</dbReference>
<dbReference type="EMBL" id="AF233787">
    <property type="protein sequence ID" value="AAK71585.1"/>
    <property type="molecule type" value="mRNA"/>
</dbReference>
<dbReference type="EMBL" id="AF233788">
    <property type="protein sequence ID" value="AAK71586.1"/>
    <property type="molecule type" value="mRNA"/>
</dbReference>
<dbReference type="EMBL" id="AF233789">
    <property type="protein sequence ID" value="AAK71587.1"/>
    <property type="molecule type" value="mRNA"/>
</dbReference>
<dbReference type="EMBL" id="AF233790">
    <property type="protein sequence ID" value="AAK71588.1"/>
    <property type="molecule type" value="mRNA"/>
</dbReference>
<dbReference type="EMBL" id="AF233791">
    <property type="protein sequence ID" value="AAK71589.1"/>
    <property type="molecule type" value="mRNA"/>
</dbReference>
<dbReference type="EMBL" id="AF233792">
    <property type="protein sequence ID" value="AAK71590.1"/>
    <property type="molecule type" value="mRNA"/>
</dbReference>
<dbReference type="EMBL" id="AF233793">
    <property type="protein sequence ID" value="AAK71591.1"/>
    <property type="molecule type" value="mRNA"/>
</dbReference>
<dbReference type="EMBL" id="AF233794">
    <property type="protein sequence ID" value="AAK71592.1"/>
    <property type="molecule type" value="mRNA"/>
</dbReference>
<dbReference type="EMBL" id="AF233795">
    <property type="protein sequence ID" value="AAK71593.1"/>
    <property type="molecule type" value="mRNA"/>
</dbReference>
<dbReference type="EMBL" id="AF233796">
    <property type="protein sequence ID" value="AAK71594.1"/>
    <property type="molecule type" value="mRNA"/>
</dbReference>
<dbReference type="EMBL" id="AF233797">
    <property type="protein sequence ID" value="AAK71595.1"/>
    <property type="molecule type" value="mRNA"/>
</dbReference>
<dbReference type="EMBL" id="AF233798">
    <property type="protein sequence ID" value="AAK71596.1"/>
    <property type="molecule type" value="mRNA"/>
</dbReference>
<dbReference type="EMBL" id="AF233799">
    <property type="protein sequence ID" value="AAK71597.1"/>
    <property type="molecule type" value="mRNA"/>
</dbReference>
<dbReference type="EMBL" id="AF233800">
    <property type="protein sequence ID" value="AAK71598.1"/>
    <property type="molecule type" value="mRNA"/>
</dbReference>
<dbReference type="EMBL" id="AF233801">
    <property type="protein sequence ID" value="AAK71599.1"/>
    <property type="molecule type" value="mRNA"/>
</dbReference>
<dbReference type="EMBL" id="AF233802">
    <property type="protein sequence ID" value="AAK71600.1"/>
    <property type="molecule type" value="mRNA"/>
</dbReference>
<dbReference type="EMBL" id="BC031762">
    <property type="protein sequence ID" value="AAH31762.1"/>
    <property type="molecule type" value="mRNA"/>
</dbReference>
<dbReference type="CCDS" id="CCDS24551.1">
    <molecule id="P22723-1"/>
</dbReference>
<dbReference type="CCDS" id="CCDS24552.2">
    <molecule id="P22723-2"/>
</dbReference>
<dbReference type="PIR" id="JH0316">
    <property type="entry name" value="JH0316"/>
</dbReference>
<dbReference type="PIR" id="JH0317">
    <property type="entry name" value="JH0317"/>
</dbReference>
<dbReference type="RefSeq" id="NP_032099.1">
    <molecule id="P22723-1"/>
    <property type="nucleotide sequence ID" value="NM_008073.4"/>
</dbReference>
<dbReference type="RefSeq" id="NP_803127.3">
    <molecule id="P22723-2"/>
    <property type="nucleotide sequence ID" value="NM_177408.7"/>
</dbReference>
<dbReference type="PDB" id="7CDB">
    <property type="method" value="X-ray"/>
    <property type="resolution" value="1.95 A"/>
    <property type="chains" value="C=406-423"/>
</dbReference>
<dbReference type="PDB" id="8FOI">
    <property type="method" value="EM"/>
    <property type="resolution" value="2.50 A"/>
    <property type="chains" value="D=1-474"/>
</dbReference>
<dbReference type="PDB" id="8G4N">
    <property type="method" value="EM"/>
    <property type="resolution" value="2.67 A"/>
    <property type="chains" value="D=1-474"/>
</dbReference>
<dbReference type="PDB" id="8G4O">
    <property type="method" value="EM"/>
    <property type="resolution" value="3.06 A"/>
    <property type="chains" value="D=1-474"/>
</dbReference>
<dbReference type="PDB" id="8G4X">
    <property type="method" value="EM"/>
    <property type="resolution" value="2.56 A"/>
    <property type="chains" value="D=1-474"/>
</dbReference>
<dbReference type="PDB" id="8G5F">
    <property type="method" value="EM"/>
    <property type="resolution" value="2.64 A"/>
    <property type="chains" value="D=1-474"/>
</dbReference>
<dbReference type="PDB" id="8G5G">
    <property type="method" value="EM"/>
    <property type="resolution" value="2.94 A"/>
    <property type="chains" value="D=1-474"/>
</dbReference>
<dbReference type="PDB" id="8G5H">
    <property type="method" value="EM"/>
    <property type="resolution" value="2.89 A"/>
    <property type="chains" value="D=1-474"/>
</dbReference>
<dbReference type="PDBsum" id="7CDB"/>
<dbReference type="PDBsum" id="8FOI"/>
<dbReference type="PDBsum" id="8G4N"/>
<dbReference type="PDBsum" id="8G4O"/>
<dbReference type="PDBsum" id="8G4X"/>
<dbReference type="PDBsum" id="8G5F"/>
<dbReference type="PDBsum" id="8G5G"/>
<dbReference type="PDBsum" id="8G5H"/>
<dbReference type="EMDB" id="EMD-29350"/>
<dbReference type="EMDB" id="EMD-29727"/>
<dbReference type="EMDB" id="EMD-29728"/>
<dbReference type="EMDB" id="EMD-29733"/>
<dbReference type="EMDB" id="EMD-29741"/>
<dbReference type="EMDB" id="EMD-29742"/>
<dbReference type="EMDB" id="EMD-29743"/>
<dbReference type="SMR" id="P22723"/>
<dbReference type="BioGRID" id="199808">
    <property type="interactions" value="12"/>
</dbReference>
<dbReference type="ComplexPortal" id="CPX-2979">
    <property type="entry name" value="GABA-A receptor, alpha1-beta2-gamma2"/>
</dbReference>
<dbReference type="ComplexPortal" id="CPX-2981">
    <property type="entry name" value="GABA-A receptor, alpha6-beta3-gamma2"/>
</dbReference>
<dbReference type="ComplexPortal" id="CPX-2982">
    <property type="entry name" value="GABA-A receptor, alpha-3/beta-3/gamma-2"/>
</dbReference>
<dbReference type="ComplexPortal" id="CPX-2983">
    <property type="entry name" value="GABA-A receptor, alpha1-beta3-gamma2"/>
</dbReference>
<dbReference type="ComplexPortal" id="CPX-2984">
    <property type="entry name" value="GABA-A receptor, alpha5-beta3-gamma2"/>
</dbReference>
<dbReference type="ComplexPortal" id="CPX-2985">
    <property type="entry name" value="GABA-A receptor, alpha2-beta3-gamma2"/>
</dbReference>
<dbReference type="DIP" id="DIP-48995N"/>
<dbReference type="FunCoup" id="P22723">
    <property type="interactions" value="490"/>
</dbReference>
<dbReference type="IntAct" id="P22723">
    <property type="interactions" value="2"/>
</dbReference>
<dbReference type="MINT" id="P22723"/>
<dbReference type="STRING" id="10090.ENSMUSP00000063812"/>
<dbReference type="BindingDB" id="P22723"/>
<dbReference type="ChEMBL" id="CHEMBL4296058"/>
<dbReference type="ChEMBL" id="CHEMBL4296059"/>
<dbReference type="DrugCentral" id="P22723"/>
<dbReference type="GlyConnect" id="2327">
    <property type="glycosylation" value="8 N-Linked glycans (2 sites)"/>
</dbReference>
<dbReference type="GlyCosmos" id="P22723">
    <property type="glycosylation" value="3 sites, 8 glycans"/>
</dbReference>
<dbReference type="GlyGen" id="P22723">
    <property type="glycosylation" value="7 sites, 12 N-linked glycans (4 sites), 1 O-linked glycan (1 site)"/>
</dbReference>
<dbReference type="iPTMnet" id="P22723"/>
<dbReference type="PhosphoSitePlus" id="P22723"/>
<dbReference type="SwissPalm" id="P22723"/>
<dbReference type="PaxDb" id="10090-ENSMUSP00000063812"/>
<dbReference type="PeptideAtlas" id="P22723"/>
<dbReference type="ProteomicsDB" id="268851">
    <molecule id="P22723-1"/>
</dbReference>
<dbReference type="ProteomicsDB" id="268852">
    <molecule id="P22723-2"/>
</dbReference>
<dbReference type="ABCD" id="P22723">
    <property type="antibodies" value="3 sequenced antibodies"/>
</dbReference>
<dbReference type="Antibodypedia" id="28585">
    <property type="antibodies" value="395 antibodies from 38 providers"/>
</dbReference>
<dbReference type="DNASU" id="14406"/>
<dbReference type="Ensembl" id="ENSMUST00000070725.11">
    <molecule id="P22723-2"/>
    <property type="protein sequence ID" value="ENSMUSP00000064739.5"/>
    <property type="gene ID" value="ENSMUSG00000020436.18"/>
</dbReference>
<dbReference type="Ensembl" id="ENSMUST00000070735.10">
    <molecule id="P22723-1"/>
    <property type="protein sequence ID" value="ENSMUSP00000063812.3"/>
    <property type="gene ID" value="ENSMUSG00000020436.18"/>
</dbReference>
<dbReference type="GeneID" id="14406"/>
<dbReference type="KEGG" id="mmu:14406"/>
<dbReference type="UCSC" id="uc007imb.2">
    <molecule id="P22723-1"/>
    <property type="organism name" value="mouse"/>
</dbReference>
<dbReference type="UCSC" id="uc007imc.3">
    <molecule id="P22723-2"/>
    <property type="organism name" value="mouse"/>
</dbReference>
<dbReference type="AGR" id="MGI:95623"/>
<dbReference type="CTD" id="2566"/>
<dbReference type="MGI" id="MGI:95623">
    <property type="gene designation" value="Gabrg2"/>
</dbReference>
<dbReference type="VEuPathDB" id="HostDB:ENSMUSG00000020436"/>
<dbReference type="eggNOG" id="KOG3642">
    <property type="taxonomic scope" value="Eukaryota"/>
</dbReference>
<dbReference type="GeneTree" id="ENSGT00940000156685"/>
<dbReference type="HOGENOM" id="CLU_010920_2_0_1"/>
<dbReference type="InParanoid" id="P22723"/>
<dbReference type="OMA" id="AHYSLCF"/>
<dbReference type="OrthoDB" id="203862at2759"/>
<dbReference type="PhylomeDB" id="P22723"/>
<dbReference type="TreeFam" id="TF315453"/>
<dbReference type="Reactome" id="R-MMU-977443">
    <property type="pathway name" value="GABA receptor activation"/>
</dbReference>
<dbReference type="BioGRID-ORCS" id="14406">
    <property type="hits" value="4 hits in 80 CRISPR screens"/>
</dbReference>
<dbReference type="ChiTaRS" id="Gabrg2">
    <property type="organism name" value="mouse"/>
</dbReference>
<dbReference type="PRO" id="PR:P22723"/>
<dbReference type="Proteomes" id="UP000000589">
    <property type="component" value="Chromosome 11"/>
</dbReference>
<dbReference type="RNAct" id="P22723">
    <property type="molecule type" value="protein"/>
</dbReference>
<dbReference type="Bgee" id="ENSMUSG00000020436">
    <property type="expression patterns" value="Expressed in visual cortex and 89 other cell types or tissues"/>
</dbReference>
<dbReference type="ExpressionAtlas" id="P22723">
    <property type="expression patterns" value="baseline and differential"/>
</dbReference>
<dbReference type="GO" id="GO:0030424">
    <property type="term" value="C:axon"/>
    <property type="evidence" value="ECO:0000314"/>
    <property type="project" value="MGI"/>
</dbReference>
<dbReference type="GO" id="GO:0034707">
    <property type="term" value="C:chloride channel complex"/>
    <property type="evidence" value="ECO:0007669"/>
    <property type="project" value="UniProtKB-KW"/>
</dbReference>
<dbReference type="GO" id="GO:0030659">
    <property type="term" value="C:cytoplasmic vesicle membrane"/>
    <property type="evidence" value="ECO:0007669"/>
    <property type="project" value="UniProtKB-SubCell"/>
</dbReference>
<dbReference type="GO" id="GO:0030425">
    <property type="term" value="C:dendrite"/>
    <property type="evidence" value="ECO:0007669"/>
    <property type="project" value="UniProtKB-SubCell"/>
</dbReference>
<dbReference type="GO" id="GO:1902711">
    <property type="term" value="C:GABA-A receptor complex"/>
    <property type="evidence" value="ECO:0000315"/>
    <property type="project" value="UniProtKB"/>
</dbReference>
<dbReference type="GO" id="GO:0098982">
    <property type="term" value="C:GABA-ergic synapse"/>
    <property type="evidence" value="ECO:0000314"/>
    <property type="project" value="SynGO"/>
</dbReference>
<dbReference type="GO" id="GO:0060077">
    <property type="term" value="C:inhibitory synapse"/>
    <property type="evidence" value="ECO:0000266"/>
    <property type="project" value="MGI"/>
</dbReference>
<dbReference type="GO" id="GO:0005886">
    <property type="term" value="C:plasma membrane"/>
    <property type="evidence" value="ECO:0000315"/>
    <property type="project" value="UniProtKB"/>
</dbReference>
<dbReference type="GO" id="GO:0099634">
    <property type="term" value="C:postsynaptic specialization membrane"/>
    <property type="evidence" value="ECO:0000250"/>
    <property type="project" value="UniProtKB"/>
</dbReference>
<dbReference type="GO" id="GO:0005254">
    <property type="term" value="F:chloride channel activity"/>
    <property type="evidence" value="ECO:0000315"/>
    <property type="project" value="UniProtKB"/>
</dbReference>
<dbReference type="GO" id="GO:0004890">
    <property type="term" value="F:GABA-A receptor activity"/>
    <property type="evidence" value="ECO:0000314"/>
    <property type="project" value="MGI"/>
</dbReference>
<dbReference type="GO" id="GO:0022851">
    <property type="term" value="F:GABA-gated chloride ion channel activity"/>
    <property type="evidence" value="ECO:0007669"/>
    <property type="project" value="Ensembl"/>
</dbReference>
<dbReference type="GO" id="GO:1904315">
    <property type="term" value="F:transmitter-gated monoatomic ion channel activity involved in regulation of postsynaptic membrane potential"/>
    <property type="evidence" value="ECO:0000314"/>
    <property type="project" value="SynGO"/>
</dbReference>
<dbReference type="GO" id="GO:0030534">
    <property type="term" value="P:adult behavior"/>
    <property type="evidence" value="ECO:0000315"/>
    <property type="project" value="MGI"/>
</dbReference>
<dbReference type="GO" id="GO:0071420">
    <property type="term" value="P:cellular response to histamine"/>
    <property type="evidence" value="ECO:0000314"/>
    <property type="project" value="UniProtKB"/>
</dbReference>
<dbReference type="GO" id="GO:0007268">
    <property type="term" value="P:chemical synaptic transmission"/>
    <property type="evidence" value="ECO:0000314"/>
    <property type="project" value="MGI"/>
</dbReference>
<dbReference type="GO" id="GO:1902476">
    <property type="term" value="P:chloride transmembrane transport"/>
    <property type="evidence" value="ECO:0000315"/>
    <property type="project" value="UniProtKB"/>
</dbReference>
<dbReference type="GO" id="GO:0007214">
    <property type="term" value="P:gamma-aminobutyric acid signaling pathway"/>
    <property type="evidence" value="ECO:0000314"/>
    <property type="project" value="MGI"/>
</dbReference>
<dbReference type="GO" id="GO:1904862">
    <property type="term" value="P:inhibitory synapse assembly"/>
    <property type="evidence" value="ECO:0000314"/>
    <property type="project" value="UniProtKB"/>
</dbReference>
<dbReference type="GO" id="GO:0009791">
    <property type="term" value="P:post-embryonic development"/>
    <property type="evidence" value="ECO:0000315"/>
    <property type="project" value="MGI"/>
</dbReference>
<dbReference type="GO" id="GO:0051932">
    <property type="term" value="P:synaptic transmission, GABAergic"/>
    <property type="evidence" value="ECO:0000303"/>
    <property type="project" value="ComplexPortal"/>
</dbReference>
<dbReference type="CDD" id="cd19000">
    <property type="entry name" value="LGIC_ECD_GABAAR_G"/>
    <property type="match status" value="1"/>
</dbReference>
<dbReference type="CDD" id="cd19054">
    <property type="entry name" value="LGIC_TM_GABAAR_gamma"/>
    <property type="match status" value="1"/>
</dbReference>
<dbReference type="FunFam" id="2.70.170.10:FF:000003">
    <property type="entry name" value="Putative gamma-aminobutyric acid receptor subunit gamma-2"/>
    <property type="match status" value="1"/>
</dbReference>
<dbReference type="Gene3D" id="2.70.170.10">
    <property type="entry name" value="Neurotransmitter-gated ion-channel ligand-binding domain"/>
    <property type="match status" value="1"/>
</dbReference>
<dbReference type="Gene3D" id="1.20.58.390">
    <property type="entry name" value="Neurotransmitter-gated ion-channel transmembrane domain"/>
    <property type="match status" value="1"/>
</dbReference>
<dbReference type="InterPro" id="IPR006028">
    <property type="entry name" value="GABAA/Glycine_rcpt"/>
</dbReference>
<dbReference type="InterPro" id="IPR005439">
    <property type="entry name" value="GABBAg2_rcpt"/>
</dbReference>
<dbReference type="InterPro" id="IPR005437">
    <property type="entry name" value="GABRG-1/4"/>
</dbReference>
<dbReference type="InterPro" id="IPR006202">
    <property type="entry name" value="Neur_chan_lig-bd"/>
</dbReference>
<dbReference type="InterPro" id="IPR036734">
    <property type="entry name" value="Neur_chan_lig-bd_sf"/>
</dbReference>
<dbReference type="InterPro" id="IPR006201">
    <property type="entry name" value="Neur_channel"/>
</dbReference>
<dbReference type="InterPro" id="IPR036719">
    <property type="entry name" value="Neuro-gated_channel_TM_sf"/>
</dbReference>
<dbReference type="InterPro" id="IPR038050">
    <property type="entry name" value="Neuro_actylchol_rec"/>
</dbReference>
<dbReference type="InterPro" id="IPR006029">
    <property type="entry name" value="Neurotrans-gated_channel_TM"/>
</dbReference>
<dbReference type="InterPro" id="IPR018000">
    <property type="entry name" value="Neurotransmitter_ion_chnl_CS"/>
</dbReference>
<dbReference type="NCBIfam" id="TIGR00860">
    <property type="entry name" value="LIC"/>
    <property type="match status" value="1"/>
</dbReference>
<dbReference type="PANTHER" id="PTHR18945">
    <property type="entry name" value="NEUROTRANSMITTER GATED ION CHANNEL"/>
    <property type="match status" value="1"/>
</dbReference>
<dbReference type="Pfam" id="PF02931">
    <property type="entry name" value="Neur_chan_LBD"/>
    <property type="match status" value="1"/>
</dbReference>
<dbReference type="Pfam" id="PF02932">
    <property type="entry name" value="Neur_chan_memb"/>
    <property type="match status" value="1"/>
</dbReference>
<dbReference type="PRINTS" id="PR00253">
    <property type="entry name" value="GABAARECEPTR"/>
</dbReference>
<dbReference type="PRINTS" id="PR01620">
    <property type="entry name" value="GABAARGAMMA"/>
</dbReference>
<dbReference type="PRINTS" id="PR01622">
    <property type="entry name" value="GABAARGAMMA2"/>
</dbReference>
<dbReference type="PRINTS" id="PR00252">
    <property type="entry name" value="NRIONCHANNEL"/>
</dbReference>
<dbReference type="SUPFAM" id="SSF90112">
    <property type="entry name" value="Neurotransmitter-gated ion-channel transmembrane pore"/>
    <property type="match status" value="1"/>
</dbReference>
<dbReference type="SUPFAM" id="SSF63712">
    <property type="entry name" value="Nicotinic receptor ligand binding domain-like"/>
    <property type="match status" value="1"/>
</dbReference>
<dbReference type="PROSITE" id="PS00236">
    <property type="entry name" value="NEUROTR_ION_CHANNEL"/>
    <property type="match status" value="1"/>
</dbReference>
<sequence>MSSPNTWSIGSSVYSPVFSQKMTLWILLLLSLYPGFTSQKSDDDYEDYASNKTWVLTPKVPEGDVTVILNNLLEGYDNKLRPDIGVKPTLIHTDMYVNSIGPVNAINMEYTIDIFFAQTWYDRRLKFNSTIKVLRLNSNMVGKIWIPDTFFRNSKKADAHWITTPNRMLRIWNDGRVLYTLRLTIDAECQLQLHNFPMDEHSCPLEFSSYGYPREEIVYQWKRSSVEVGDTRSWRLYQFSFVGLRNTTEVVKTTSGDYVVMSVYFDLSRRMGYFTIQTYIPCTLIVVLSWVSFWINKDAVPARTSLGITTVLTMTTLSTIARKSLPKVSYVTAMDLFVSVCFIFVFSALVEYGTLHYFVSNRKPSKDKDKKKKNPLLRMFSFKAPTIDIRPRSATIQMNNATHLQERDEEYGYECLDGKDCASFFCCFEDCRTGAWRHGRIHIRIAKMDSYARIFFPTAFCLFNLVYWVSYLYL</sequence>
<keyword id="KW-0002">3D-structure</keyword>
<keyword id="KW-0025">Alternative splicing</keyword>
<keyword id="KW-1003">Cell membrane</keyword>
<keyword id="KW-0966">Cell projection</keyword>
<keyword id="KW-0868">Chloride</keyword>
<keyword id="KW-0869">Chloride channel</keyword>
<keyword id="KW-0968">Cytoplasmic vesicle</keyword>
<keyword id="KW-1015">Disulfide bond</keyword>
<keyword id="KW-0325">Glycoprotein</keyword>
<keyword id="KW-0407">Ion channel</keyword>
<keyword id="KW-0406">Ion transport</keyword>
<keyword id="KW-0449">Lipoprotein</keyword>
<keyword id="KW-0472">Membrane</keyword>
<keyword id="KW-0564">Palmitate</keyword>
<keyword id="KW-0597">Phosphoprotein</keyword>
<keyword id="KW-0628">Postsynaptic cell membrane</keyword>
<keyword id="KW-1185">Reference proteome</keyword>
<keyword id="KW-0732">Signal</keyword>
<keyword id="KW-0770">Synapse</keyword>
<keyword id="KW-0812">Transmembrane</keyword>
<keyword id="KW-1133">Transmembrane helix</keyword>
<keyword id="KW-0813">Transport</keyword>
<proteinExistence type="evidence at protein level"/>
<gene>
    <name evidence="18" type="primary">Gabrg2</name>
</gene>
<name>GBRG2_MOUSE</name>
<reference key="1">
    <citation type="journal article" date="1991" name="J. Neurochem.">
        <title>Generation of two forms of the gamma-aminobutyric acidA receptor gamma 2-subunit in mice by alternative splicing.</title>
        <authorList>
            <person name="Kofuji P."/>
            <person name="Wang J.B."/>
            <person name="Moss S.J."/>
            <person name="Huganir R.L."/>
            <person name="Burt D.R."/>
        </authorList>
    </citation>
    <scope>NUCLEOTIDE SEQUENCE [MRNA] (ISOFORMS 2L AND 2S)</scope>
</reference>
<reference key="2">
    <citation type="submission" date="1991-04" db="EMBL/GenBank/DDBJ databases">
        <authorList>
            <person name="Sikela J.M."/>
            <person name="Shaw W.D."/>
            <person name="Khan A.S."/>
            <person name="Lin L.-H."/>
            <person name="Leidenheimer G."/>
            <person name="Siegel R.E."/>
        </authorList>
    </citation>
    <scope>NUCLEOTIDE SEQUENCE [MRNA] (ISOFORM 2L)</scope>
</reference>
<reference key="3">
    <citation type="journal article" date="2000" name="Alcohol. Clin. Exp. Res.">
        <title>Allelic variation in the GABA A receptor gamma2 subunit is associated with genetic susceptibility to ethanol-induced motor incoordination and hypothermia, conditioned taste aversion, and withdrawal in BXD/Ty recombinant inbred mice.</title>
        <authorList>
            <person name="Hood H.M."/>
            <person name="Buck K.J."/>
        </authorList>
    </citation>
    <scope>NUCLEOTIDE SEQUENCE [MRNA] (ISOFORM 2L)</scope>
    <source>
        <strain>C57BL/6J</strain>
        <strain>DBA/2J</strain>
        <strain>Various BXD strains</strain>
        <tissue>Brain</tissue>
    </source>
</reference>
<reference key="4">
    <citation type="journal article" date="2004" name="Genome Res.">
        <title>The status, quality, and expansion of the NIH full-length cDNA project: the Mammalian Gene Collection (MGC).</title>
        <authorList>
            <consortium name="The MGC Project Team"/>
        </authorList>
    </citation>
    <scope>NUCLEOTIDE SEQUENCE [LARGE SCALE MRNA] (ISOFORM 2L)</scope>
    <source>
        <tissue>Retina</tissue>
    </source>
</reference>
<reference key="5">
    <citation type="journal article" date="2004" name="J. Neurosci.">
        <title>The gamma2 subunit of GABA(A) receptors is a substrate for palmitoylation by GODZ.</title>
        <authorList>
            <person name="Keller C.A."/>
            <person name="Yuan X."/>
            <person name="Panzanelli P."/>
            <person name="Martin M.L."/>
            <person name="Alldred M."/>
            <person name="Sassoe-Pognetto M."/>
            <person name="Luescher B."/>
        </authorList>
    </citation>
    <scope>PALMITOYLATION</scope>
</reference>
<reference key="6">
    <citation type="journal article" date="2004" name="Mol. Cell. Neurosci.">
        <title>Palmitoylation regulates the clustering and cell surface stability of GABAA receptors.</title>
        <authorList>
            <person name="Rathenberg J."/>
            <person name="Kittler J.T."/>
            <person name="Moss S.J."/>
        </authorList>
    </citation>
    <scope>PALMITOYLATION</scope>
</reference>
<reference key="7">
    <citation type="journal article" date="2006" name="J. Neurosci.">
        <title>GODZ-mediated palmitoylation of GABA(A) receptors is required for normal assembly and function of GABAergic inhibitory synapses.</title>
        <authorList>
            <person name="Fang C."/>
            <person name="Deng L."/>
            <person name="Keller C.A."/>
            <person name="Fukata M."/>
            <person name="Fukata Y."/>
            <person name="Chen G."/>
            <person name="Luescher B."/>
        </authorList>
    </citation>
    <scope>PALMITOYLATION BY ZDHHC3</scope>
    <scope>SUBCELLULAR LOCATION</scope>
</reference>
<reference key="8">
    <citation type="journal article" date="2008" name="J. Biol. Chem.">
        <title>Histamine action on vertebrate GABAA receptors: direct channel gating and potentiation of GABA responses.</title>
        <authorList>
            <person name="Saras A."/>
            <person name="Gisselmann G."/>
            <person name="Vogt-Eisele A.K."/>
            <person name="Erlkamp K.S."/>
            <person name="Kletke O."/>
            <person name="Pusch H."/>
            <person name="Hatt H."/>
        </authorList>
    </citation>
    <scope>FUNCTION</scope>
    <scope>TRANSPORTER ACTIVITY</scope>
    <scope>SUBCELLULAR LOCATION</scope>
    <scope>SUBUNIT</scope>
</reference>
<reference key="9">
    <citation type="journal article" date="2014" name="Eur. J. Cell Biol.">
        <title>The kinesin KIF21B participates in the cell surface delivery of gamma2 subunit-containing GABAA receptors.</title>
        <authorList>
            <person name="Labonte D."/>
            <person name="Thies E."/>
            <person name="Kneussel M."/>
        </authorList>
    </citation>
    <scope>SUBCELLULAR LOCATION</scope>
    <scope>TISSUE SPECIFICITY</scope>
</reference>
<reference key="10">
    <citation type="journal article" date="2016" name="J. Biol. Chem.">
        <title>Gamma-aminobutyric acid type A (GABAA) receptor subunits play a direct structural role in synaptic contact formation via their N-terminal extracellular domains.</title>
        <authorList>
            <person name="Brown L.E."/>
            <person name="Nicholson M.W."/>
            <person name="Arama J.E."/>
            <person name="Mercer A."/>
            <person name="Thomson A.M."/>
            <person name="Jovanovic J.N."/>
        </authorList>
    </citation>
    <scope>FUNCTION</scope>
    <scope>TRANSPORTER ACTIVITY</scope>
    <scope>GLYCOSYLATION</scope>
    <scope>DOMAIN EXTRACELLULAR</scope>
</reference>
<reference key="11">
    <citation type="journal article" date="2017" name="Cell Rep.">
        <title>An essential role for the tetraspanin LHFPL4 in the cell-type-specific targeting and clustering of synaptic GABAA ceceptors.</title>
        <authorList>
            <person name="Davenport E.C."/>
            <person name="Pendolino V."/>
            <person name="Kontou G."/>
            <person name="McGee T.P."/>
            <person name="Sheehan D.F."/>
            <person name="Lopez-Domenech G."/>
            <person name="Farrant M."/>
            <person name="Kittler J.T."/>
        </authorList>
    </citation>
    <scope>INTERACTION WITH LHFPL4</scope>
</reference>
<reference key="12">
    <citation type="journal article" date="2017" name="Neuron">
        <title>GARLH family proteins stabilize GABAA receptors at synapses.</title>
        <authorList>
            <person name="Yamasaki T."/>
            <person name="Hoyos-Ramirez E."/>
            <person name="Martenson J.S."/>
            <person name="Morimoto-Tomita M."/>
            <person name="Tomita S."/>
        </authorList>
    </citation>
    <scope>SUBCELLULAR LOCATION</scope>
</reference>
<reference key="13">
    <citation type="journal article" date="2018" name="Cell Rep.">
        <title>Impairment of inhibitory synapse formation and motor behavior in mice lacking the NL2 binding partner LHFPL4/GARLH4.</title>
        <authorList>
            <person name="Wu M."/>
            <person name="Tian H.L."/>
            <person name="Liu X."/>
            <person name="Lai J.H.C."/>
            <person name="Du S."/>
            <person name="Xia J."/>
        </authorList>
    </citation>
    <scope>INTERACTION WITH LHFLP4</scope>
</reference>
<reference key="14">
    <citation type="journal article" date="2019" name="Science">
        <title>Shisa7 is a GABAA receptor auxiliary subunit controlling benzodiazepine actions.</title>
        <authorList>
            <person name="Han W."/>
            <person name="Li J."/>
            <person name="Pelkey K.A."/>
            <person name="Pandey S."/>
            <person name="Chen X."/>
            <person name="Wang Y.X."/>
            <person name="Wu K."/>
            <person name="Ge L."/>
            <person name="Li T."/>
            <person name="Castellano D."/>
            <person name="Liu C."/>
            <person name="Wu L.G."/>
            <person name="Petralia R.S."/>
            <person name="Lynch J.W."/>
            <person name="McBain C.J."/>
            <person name="Lu W."/>
        </authorList>
    </citation>
    <scope>INTERACTION WITH SHISA7</scope>
</reference>
<feature type="signal peptide" evidence="4">
    <location>
        <begin position="1"/>
        <end position="38"/>
    </location>
</feature>
<feature type="chain" id="PRO_0000000478" description="Gamma-aminobutyric acid receptor subunit gamma-2">
    <location>
        <begin position="39"/>
        <end position="474"/>
    </location>
</feature>
<feature type="topological domain" description="Extracellular" evidence="17">
    <location>
        <begin position="39"/>
        <end position="274"/>
    </location>
</feature>
<feature type="transmembrane region" description="Helical" evidence="2">
    <location>
        <begin position="275"/>
        <end position="295"/>
    </location>
</feature>
<feature type="topological domain" description="Cytoplasmic" evidence="17">
    <location>
        <begin position="296"/>
        <end position="301"/>
    </location>
</feature>
<feature type="transmembrane region" description="Helical" evidence="2">
    <location>
        <begin position="302"/>
        <end position="321"/>
    </location>
</feature>
<feature type="topological domain" description="Extracellular" evidence="17">
    <location>
        <begin position="322"/>
        <end position="333"/>
    </location>
</feature>
<feature type="transmembrane region" description="Helical" evidence="2">
    <location>
        <begin position="334"/>
        <end position="358"/>
    </location>
</feature>
<feature type="topological domain" description="Cytoplasmic" evidence="17">
    <location>
        <begin position="359"/>
        <end position="450"/>
    </location>
</feature>
<feature type="transmembrane region" description="Helical" evidence="2">
    <location>
        <begin position="451"/>
        <end position="472"/>
    </location>
</feature>
<feature type="topological domain" description="Extracellular" evidence="17">
    <location>
        <begin position="473"/>
        <end position="474"/>
    </location>
</feature>
<feature type="modified residue" description="Phosphoserine; by PKC" evidence="17">
    <location>
        <position position="381"/>
    </location>
</feature>
<feature type="glycosylation site" description="N-linked (GlcNAc...) asparagine" evidence="4">
    <location>
        <position position="51"/>
    </location>
</feature>
<feature type="glycosylation site" description="N-linked (GlcNAc...) asparagine" evidence="4">
    <location>
        <position position="128"/>
    </location>
</feature>
<feature type="glycosylation site" description="N-linked (GlcNAc...) asparagine" evidence="4">
    <location>
        <position position="246"/>
    </location>
</feature>
<feature type="disulfide bond" evidence="2">
    <location>
        <begin position="189"/>
        <end position="203"/>
    </location>
</feature>
<feature type="splice variant" id="VSP_000091" description="In isoform 2S." evidence="15">
    <location>
        <begin position="376"/>
        <end position="383"/>
    </location>
</feature>
<feature type="sequence variant" description="In strain: DBA/2J.">
    <original>A</original>
    <variation>T</variation>
    <location>
        <position position="49"/>
    </location>
</feature>
<feature type="helix" evidence="20">
    <location>
        <begin position="64"/>
        <end position="73"/>
    </location>
</feature>
<feature type="strand" evidence="20">
    <location>
        <begin position="78"/>
        <end position="80"/>
    </location>
</feature>
<feature type="turn" evidence="20">
    <location>
        <begin position="82"/>
        <end position="86"/>
    </location>
</feature>
<feature type="strand" evidence="20">
    <location>
        <begin position="89"/>
        <end position="95"/>
    </location>
</feature>
<feature type="strand" evidence="20">
    <location>
        <begin position="97"/>
        <end position="104"/>
    </location>
</feature>
<feature type="turn" evidence="20">
    <location>
        <begin position="105"/>
        <end position="108"/>
    </location>
</feature>
<feature type="strand" evidence="20">
    <location>
        <begin position="109"/>
        <end position="120"/>
    </location>
</feature>
<feature type="strand" evidence="20">
    <location>
        <begin position="132"/>
        <end position="136"/>
    </location>
</feature>
<feature type="helix" evidence="20">
    <location>
        <begin position="138"/>
        <end position="140"/>
    </location>
</feature>
<feature type="turn" evidence="20">
    <location>
        <begin position="141"/>
        <end position="143"/>
    </location>
</feature>
<feature type="strand" evidence="20">
    <location>
        <begin position="149"/>
        <end position="151"/>
    </location>
</feature>
<feature type="strand" evidence="20">
    <location>
        <begin position="154"/>
        <end position="159"/>
    </location>
</feature>
<feature type="strand" evidence="20">
    <location>
        <begin position="162"/>
        <end position="164"/>
    </location>
</feature>
<feature type="strand" evidence="20">
    <location>
        <begin position="167"/>
        <end position="172"/>
    </location>
</feature>
<feature type="strand" evidence="20">
    <location>
        <begin position="180"/>
        <end position="188"/>
    </location>
</feature>
<feature type="strand" evidence="20">
    <location>
        <begin position="201"/>
        <end position="203"/>
    </location>
</feature>
<feature type="strand" evidence="20">
    <location>
        <begin position="207"/>
        <end position="212"/>
    </location>
</feature>
<feature type="turn" evidence="20">
    <location>
        <begin position="214"/>
        <end position="216"/>
    </location>
</feature>
<feature type="strand" evidence="20">
    <location>
        <begin position="217"/>
        <end position="226"/>
    </location>
</feature>
<feature type="helix" evidence="20">
    <location>
        <begin position="231"/>
        <end position="233"/>
    </location>
</feature>
<feature type="strand" evidence="20">
    <location>
        <begin position="239"/>
        <end position="252"/>
    </location>
</feature>
<feature type="strand" evidence="20">
    <location>
        <begin position="257"/>
        <end position="269"/>
    </location>
</feature>
<feature type="helix" evidence="20">
    <location>
        <begin position="272"/>
        <end position="277"/>
    </location>
</feature>
<feature type="helix" evidence="20">
    <location>
        <begin position="279"/>
        <end position="294"/>
    </location>
</feature>
<feature type="helix" evidence="20">
    <location>
        <begin position="300"/>
        <end position="321"/>
    </location>
</feature>
<feature type="turn" evidence="20">
    <location>
        <begin position="322"/>
        <end position="324"/>
    </location>
</feature>
<feature type="helix" evidence="20">
    <location>
        <begin position="333"/>
        <end position="356"/>
    </location>
</feature>
<feature type="helix" evidence="19">
    <location>
        <begin position="418"/>
        <end position="421"/>
    </location>
</feature>
<feature type="helix" evidence="20">
    <location>
        <begin position="449"/>
        <end position="469"/>
    </location>
</feature>
<comment type="function">
    <text evidence="1 2 3 8 10">Gamma subunit of the heteropentameric ligand-gated chloride channel gated by gamma-aminobutyric acid (GABA), a major inhibitory neurotransmitter in the brain (PubMed:18281286, PubMed:27129275). GABA-gated chloride channels, also named GABA(A) receptors (GABAAR), consist of five subunits arranged around a central pore and contain GABA active binding site(s) located at the alpha and beta subunit interface(s). When activated by GABA, GABAARs selectively allow the flow of chloride anions across the cell membrane down their electrochemical gradient (By similarity). Gamma-2/GABRG2-containing GABAARs are found at both synaptic and extrasynaptic sites (By similarity). Chloride influx into the postsynaptic neuron following GABAAR opening decreases the neuron ability to generate a new action potential, thereby reducing nerve transmission (By similarity). GABAARs containing alpha-1 and beta-2 or -3 subunits exhibit synaptogenic activity; the gamma-2 subunit being necessary but not sufficient to induce rapid synaptic contacts formation (PubMed:27129275). Extrasynaptic gamma-2-containing receptors contribute to the tonic GABAergic inhibition (By similarity). GABAARs function also as histamine receptor where histamine binds at the interface of two neighboring beta subunits and potentiates GABA response in a gamma-2 subunit-controlled manner (PubMed:18281286).</text>
</comment>
<comment type="catalytic activity">
    <reaction evidence="8 10">
        <text>chloride(in) = chloride(out)</text>
        <dbReference type="Rhea" id="RHEA:29823"/>
        <dbReference type="ChEBI" id="CHEBI:17996"/>
    </reaction>
</comment>
<comment type="activity regulation">
    <text evidence="2 3 8">Allosterically activated by benzodiazepines (By similarity). Activated by pentobarbital (By similarity). Inhibited by the antagonist bicuculline (By similarity). Inhibited by zinc ions (By similarity). Potentiated by histamine (PubMed:18281286).</text>
</comment>
<comment type="subunit">
    <text evidence="2 3 8 12 13 14">Heteropentamer, formed by a combination of alpha (GABRA1-6), beta (GABRB1-3), gamma (GABRG1-3), delta (GABRD), epsilon (GABRE), rho (GABRR1-3), pi (GABRP) and theta (GABRQ) chains, each subunit exhibiting distinct physiological and pharmacological properties (PubMed:18281286). Interacts with GABARAP (By similarity). Interacts with KIF21B (By similarity). Identified in a complex of 720 kDa composed of LHFPL4, NLGN2, GABRA1, GABRB2, GABRG2 and GABRB3 (By similarity). Interacts with LHFPL4 (PubMed:28978485, PubMed:29742426). Interacts with SHISA7; interaction leads to the regulation of GABA(A) receptor trafficking, channel deactivation kinetics and pharmacology (PubMed:31601770).</text>
</comment>
<comment type="subcellular location">
    <subcellularLocation>
        <location evidence="7 8">Postsynaptic cell membrane</location>
        <topology evidence="2">Multi-pass membrane protein</topology>
    </subcellularLocation>
    <subcellularLocation>
        <location evidence="8 9 11">Cell membrane</location>
        <topology evidence="2">Multi-pass membrane protein</topology>
    </subcellularLocation>
    <subcellularLocation>
        <location evidence="9">Cell projection</location>
        <location evidence="9">Dendrite</location>
    </subcellularLocation>
    <subcellularLocation>
        <location evidence="3">Cytoplasmic vesicle membrane</location>
    </subcellularLocation>
</comment>
<comment type="alternative products">
    <event type="alternative splicing"/>
    <isoform>
        <id>P22723-1</id>
        <name>2L</name>
        <sequence type="displayed"/>
    </isoform>
    <isoform>
        <id>P22723-2</id>
        <name>2S</name>
        <sequence type="described" ref="VSP_000091"/>
    </isoform>
</comment>
<comment type="tissue specificity">
    <text evidence="9">Expressed in brain neurons (at protein level).</text>
</comment>
<comment type="domain">
    <text evidence="10">The extracellular domain contributes to synaptic contact formation.</text>
</comment>
<comment type="domain">
    <text evidence="2">GABAARs subunits share a common topological structure: a peptide sequence made up of a long extracellular N-terminal, four transmembrane domains, intracellular or cytoplasmic domain located between the third and the fourth transmembrane domains.</text>
</comment>
<comment type="PTM">
    <text evidence="10">Glycosylated.</text>
</comment>
<comment type="PTM">
    <text evidence="5 6 7">Palmitoylated by ZDHHC3/GODZ; required for the accumulation of GABA(A) receptors at the postsynaptic membrane of inhibitory GABAergic synapses.</text>
</comment>
<comment type="miscellaneous">
    <text>This subunit carries the benzodiazepine binding site.</text>
</comment>
<comment type="similarity">
    <text evidence="17">Belongs to the ligand-gated ion channel (TC 1.A.9) family. Gamma-aminobutyric acid receptor (TC 1.A.9.5) subfamily. GABRG2 sub-subfamily.</text>
</comment>
<protein>
    <recommendedName>
        <fullName evidence="16">Gamma-aminobutyric acid receptor subunit gamma-2</fullName>
    </recommendedName>
    <alternativeName>
        <fullName evidence="2">GABA(A) receptor subunit gamma-2</fullName>
        <shortName evidence="2">GABAAR subunit gamma-2</shortName>
    </alternativeName>
</protein>